<gene>
    <name evidence="1" type="primary">hrcA</name>
    <name type="ordered locus">Mkms_3523</name>
</gene>
<organism>
    <name type="scientific">Mycobacterium sp. (strain KMS)</name>
    <dbReference type="NCBI Taxonomy" id="189918"/>
    <lineage>
        <taxon>Bacteria</taxon>
        <taxon>Bacillati</taxon>
        <taxon>Actinomycetota</taxon>
        <taxon>Actinomycetes</taxon>
        <taxon>Mycobacteriales</taxon>
        <taxon>Mycobacteriaceae</taxon>
        <taxon>Mycobacterium</taxon>
    </lineage>
</organism>
<feature type="chain" id="PRO_1000010429" description="Heat-inducible transcription repressor HrcA">
    <location>
        <begin position="1"/>
        <end position="347"/>
    </location>
</feature>
<dbReference type="EMBL" id="CP000518">
    <property type="protein sequence ID" value="ABL92717.1"/>
    <property type="molecule type" value="Genomic_DNA"/>
</dbReference>
<dbReference type="SMR" id="A1UIQ9"/>
<dbReference type="STRING" id="189918.Mkms_3523"/>
<dbReference type="KEGG" id="mkm:Mkms_3523"/>
<dbReference type="HOGENOM" id="CLU_050019_2_0_11"/>
<dbReference type="OrthoDB" id="9783139at2"/>
<dbReference type="GO" id="GO:0003677">
    <property type="term" value="F:DNA binding"/>
    <property type="evidence" value="ECO:0007669"/>
    <property type="project" value="InterPro"/>
</dbReference>
<dbReference type="GO" id="GO:0045892">
    <property type="term" value="P:negative regulation of DNA-templated transcription"/>
    <property type="evidence" value="ECO:0007669"/>
    <property type="project" value="UniProtKB-UniRule"/>
</dbReference>
<dbReference type="FunFam" id="1.10.10.10:FF:000049">
    <property type="entry name" value="Heat-inducible transcription repressor HrcA"/>
    <property type="match status" value="1"/>
</dbReference>
<dbReference type="Gene3D" id="3.30.450.40">
    <property type="match status" value="1"/>
</dbReference>
<dbReference type="Gene3D" id="3.30.390.60">
    <property type="entry name" value="Heat-inducible transcription repressor hrca homolog, domain 3"/>
    <property type="match status" value="1"/>
</dbReference>
<dbReference type="Gene3D" id="1.10.10.10">
    <property type="entry name" value="Winged helix-like DNA-binding domain superfamily/Winged helix DNA-binding domain"/>
    <property type="match status" value="1"/>
</dbReference>
<dbReference type="HAMAP" id="MF_00081">
    <property type="entry name" value="HrcA"/>
    <property type="match status" value="1"/>
</dbReference>
<dbReference type="InterPro" id="IPR029016">
    <property type="entry name" value="GAF-like_dom_sf"/>
</dbReference>
<dbReference type="InterPro" id="IPR002571">
    <property type="entry name" value="HrcA"/>
</dbReference>
<dbReference type="InterPro" id="IPR021153">
    <property type="entry name" value="HrcA_C"/>
</dbReference>
<dbReference type="InterPro" id="IPR036388">
    <property type="entry name" value="WH-like_DNA-bd_sf"/>
</dbReference>
<dbReference type="InterPro" id="IPR036390">
    <property type="entry name" value="WH_DNA-bd_sf"/>
</dbReference>
<dbReference type="InterPro" id="IPR023120">
    <property type="entry name" value="WHTH_transcript_rep_HrcA_IDD"/>
</dbReference>
<dbReference type="NCBIfam" id="TIGR00331">
    <property type="entry name" value="hrcA"/>
    <property type="match status" value="1"/>
</dbReference>
<dbReference type="PANTHER" id="PTHR34824">
    <property type="entry name" value="HEAT-INDUCIBLE TRANSCRIPTION REPRESSOR HRCA"/>
    <property type="match status" value="1"/>
</dbReference>
<dbReference type="PANTHER" id="PTHR34824:SF1">
    <property type="entry name" value="HEAT-INDUCIBLE TRANSCRIPTION REPRESSOR HRCA"/>
    <property type="match status" value="1"/>
</dbReference>
<dbReference type="Pfam" id="PF01628">
    <property type="entry name" value="HrcA"/>
    <property type="match status" value="1"/>
</dbReference>
<dbReference type="PIRSF" id="PIRSF005485">
    <property type="entry name" value="HrcA"/>
    <property type="match status" value="1"/>
</dbReference>
<dbReference type="SUPFAM" id="SSF55781">
    <property type="entry name" value="GAF domain-like"/>
    <property type="match status" value="1"/>
</dbReference>
<dbReference type="SUPFAM" id="SSF46785">
    <property type="entry name" value="Winged helix' DNA-binding domain"/>
    <property type="match status" value="1"/>
</dbReference>
<sequence>MGSADDRRFEVLRAIVADFVATKEPIGSKTLVERHNLGVSSATVRNDMAVLEAEGYITQPHTSSGRVPTEKGYREFVDRLDDVKPLSSAERRAILKFLETGVDLDDVLRRAVRLLAQLTRQVAIVQYPTLSTSSVRHLEVVALTPARLLLVVITDTGRVDQRIVELGDAIDEHELATLRDLLGQALEGKRLSAASVAVSDLATHLSGSPGMSHRLADAVGRSATVLVETLVEHTEERLLLGGTANLTRNTADFGGSLRSVLEALEEQVVVLRLLAAQQEAGKVTVRIGHETEAEQMAGTSVVTTAYGSSGKVYGGMGVVGPTRMDYPGTIANVAAVALYIGEVLGTR</sequence>
<keyword id="KW-0678">Repressor</keyword>
<keyword id="KW-0346">Stress response</keyword>
<keyword id="KW-0804">Transcription</keyword>
<keyword id="KW-0805">Transcription regulation</keyword>
<comment type="function">
    <text evidence="1">Negative regulator of class I heat shock genes (grpE-dnaK-dnaJ and groELS operons). Prevents heat-shock induction of these operons.</text>
</comment>
<comment type="similarity">
    <text evidence="1">Belongs to the HrcA family.</text>
</comment>
<protein>
    <recommendedName>
        <fullName evidence="1">Heat-inducible transcription repressor HrcA</fullName>
    </recommendedName>
</protein>
<proteinExistence type="inferred from homology"/>
<reference key="1">
    <citation type="submission" date="2006-12" db="EMBL/GenBank/DDBJ databases">
        <title>Complete sequence of chromosome of Mycobacterium sp. KMS.</title>
        <authorList>
            <consortium name="US DOE Joint Genome Institute"/>
            <person name="Copeland A."/>
            <person name="Lucas S."/>
            <person name="Lapidus A."/>
            <person name="Barry K."/>
            <person name="Detter J.C."/>
            <person name="Glavina del Rio T."/>
            <person name="Hammon N."/>
            <person name="Israni S."/>
            <person name="Dalin E."/>
            <person name="Tice H."/>
            <person name="Pitluck S."/>
            <person name="Kiss H."/>
            <person name="Brettin T."/>
            <person name="Bruce D."/>
            <person name="Han C."/>
            <person name="Tapia R."/>
            <person name="Gilna P."/>
            <person name="Schmutz J."/>
            <person name="Larimer F."/>
            <person name="Land M."/>
            <person name="Hauser L."/>
            <person name="Kyrpides N."/>
            <person name="Mikhailova N."/>
            <person name="Miller C.D."/>
            <person name="Richardson P."/>
        </authorList>
    </citation>
    <scope>NUCLEOTIDE SEQUENCE [LARGE SCALE GENOMIC DNA]</scope>
    <source>
        <strain>KMS</strain>
    </source>
</reference>
<accession>A1UIQ9</accession>
<evidence type="ECO:0000255" key="1">
    <source>
        <dbReference type="HAMAP-Rule" id="MF_00081"/>
    </source>
</evidence>
<name>HRCA_MYCSK</name>